<gene>
    <name evidence="1" type="primary">gcvP</name>
    <name type="ordered locus">UTI89_C3288</name>
</gene>
<proteinExistence type="inferred from homology"/>
<sequence length="957" mass="104321">MTQTLSQLENSGAFIERHIGPDAAQQQEMLNAVGAQSLNALTGQIVPKDIQLATPPQVGAPATEYAALAELKAIASRNKRFTSYIGMGYTAVQLPPVILRNMLENPGWYTAYTPYQPEVSQGRLEALLNFQQVTLDLTGLDMASASLLDEATAAAEAMAMAKRVSKLKNANRFFVASDVHPQTLDVVRTRAETFGFEVIVDDAQKVLDHQDVFGVLLQQVGTTGEIHDYTALISELKSRKIVVSVAADIMALVLLTAPGKQGADIVFGSAQRFGVPMGYGGPHAAFFAAKDEYKRSMPGRIIGVSKDAAGNTALRMAMQTREQHIRREKANSNICTSQVLLANIASLYAVYHGPVGLKRIANRIHRLTDILAAGLQQKGLKLRHAHYFDTLCVEVVDKAGVLARAEAAEINLRSDILNAVGITLDETTTRENVMQLFSVLLGDNHGLDIDTLDKDVAHDSRSIQAAMLRDDEILTHPVFNRYHSETEMMRYMHSLERKDLALNQAMIPLGSCTMKLNAAAEMIPITWPEFAELHPFCPPEQAEGYQQMIAQLADWLVKLTGYDAVCMQPNSGAQGEYAGLLAIRHYHESRNEGHRDICLIPASAHGTNPASAHMAGMQVVVVACDKNGNIDLTDLRAKAEQAGDNLSCIMVTYPSTHGVYEETIREVCEVVHQFGGQVYLDGANMNAQVGITSPGFIGADVSHLNLHKTFCIPHGGGGPGMGPIGVKAHLAPFVPGHSVVQIEGMLTRQGAVSAAPFGSASILPISWMYIRMMGAEGLKKASQVAILNANYIASRLQDAFPVLYTGRDGRVAHECILDIRPLKEETGISELDIAKRLIDYGFHAPTMSFPVAGTLMVEPTESESKVELDRFIDAMLAIRAEIDQVKAGVWPLEDNPLVNAPHIQSELVAEWAHPYSREVAVFPAGVADKYWPTVKRLDDVYGDRNLFCSCVPISEYQ</sequence>
<evidence type="ECO:0000255" key="1">
    <source>
        <dbReference type="HAMAP-Rule" id="MF_00711"/>
    </source>
</evidence>
<keyword id="KW-0560">Oxidoreductase</keyword>
<keyword id="KW-0663">Pyridoxal phosphate</keyword>
<name>GCSP_ECOUT</name>
<accession>Q1R7C8</accession>
<feature type="chain" id="PRO_1000045582" description="Glycine dehydrogenase (decarboxylating)">
    <location>
        <begin position="1"/>
        <end position="957"/>
    </location>
</feature>
<feature type="modified residue" description="N6-(pyridoxal phosphate)lysine" evidence="1">
    <location>
        <position position="708"/>
    </location>
</feature>
<organism>
    <name type="scientific">Escherichia coli (strain UTI89 / UPEC)</name>
    <dbReference type="NCBI Taxonomy" id="364106"/>
    <lineage>
        <taxon>Bacteria</taxon>
        <taxon>Pseudomonadati</taxon>
        <taxon>Pseudomonadota</taxon>
        <taxon>Gammaproteobacteria</taxon>
        <taxon>Enterobacterales</taxon>
        <taxon>Enterobacteriaceae</taxon>
        <taxon>Escherichia</taxon>
    </lineage>
</organism>
<comment type="function">
    <text evidence="1">The glycine cleavage system catalyzes the degradation of glycine. The P protein binds the alpha-amino group of glycine through its pyridoxal phosphate cofactor; CO(2) is released and the remaining methylamine moiety is then transferred to the lipoamide cofactor of the H protein.</text>
</comment>
<comment type="catalytic activity">
    <reaction evidence="1">
        <text>N(6)-[(R)-lipoyl]-L-lysyl-[glycine-cleavage complex H protein] + glycine + H(+) = N(6)-[(R)-S(8)-aminomethyldihydrolipoyl]-L-lysyl-[glycine-cleavage complex H protein] + CO2</text>
        <dbReference type="Rhea" id="RHEA:24304"/>
        <dbReference type="Rhea" id="RHEA-COMP:10494"/>
        <dbReference type="Rhea" id="RHEA-COMP:10495"/>
        <dbReference type="ChEBI" id="CHEBI:15378"/>
        <dbReference type="ChEBI" id="CHEBI:16526"/>
        <dbReference type="ChEBI" id="CHEBI:57305"/>
        <dbReference type="ChEBI" id="CHEBI:83099"/>
        <dbReference type="ChEBI" id="CHEBI:83143"/>
        <dbReference type="EC" id="1.4.4.2"/>
    </reaction>
</comment>
<comment type="cofactor">
    <cofactor evidence="1">
        <name>pyridoxal 5'-phosphate</name>
        <dbReference type="ChEBI" id="CHEBI:597326"/>
    </cofactor>
</comment>
<comment type="subunit">
    <text evidence="1">The glycine cleavage system is composed of four proteins: P, T, L and H.</text>
</comment>
<comment type="similarity">
    <text evidence="1">Belongs to the GcvP family.</text>
</comment>
<reference key="1">
    <citation type="journal article" date="2006" name="Proc. Natl. Acad. Sci. U.S.A.">
        <title>Identification of genes subject to positive selection in uropathogenic strains of Escherichia coli: a comparative genomics approach.</title>
        <authorList>
            <person name="Chen S.L."/>
            <person name="Hung C.-S."/>
            <person name="Xu J."/>
            <person name="Reigstad C.S."/>
            <person name="Magrini V."/>
            <person name="Sabo A."/>
            <person name="Blasiar D."/>
            <person name="Bieri T."/>
            <person name="Meyer R.R."/>
            <person name="Ozersky P."/>
            <person name="Armstrong J.R."/>
            <person name="Fulton R.S."/>
            <person name="Latreille J.P."/>
            <person name="Spieth J."/>
            <person name="Hooton T.M."/>
            <person name="Mardis E.R."/>
            <person name="Hultgren S.J."/>
            <person name="Gordon J.I."/>
        </authorList>
    </citation>
    <scope>NUCLEOTIDE SEQUENCE [LARGE SCALE GENOMIC DNA]</scope>
    <source>
        <strain>UTI89 / UPEC</strain>
    </source>
</reference>
<dbReference type="EC" id="1.4.4.2" evidence="1"/>
<dbReference type="EMBL" id="CP000243">
    <property type="protein sequence ID" value="ABE08736.1"/>
    <property type="molecule type" value="Genomic_DNA"/>
</dbReference>
<dbReference type="RefSeq" id="WP_000195072.1">
    <property type="nucleotide sequence ID" value="NZ_CP064825.1"/>
</dbReference>
<dbReference type="SMR" id="Q1R7C8"/>
<dbReference type="KEGG" id="eci:UTI89_C3288"/>
<dbReference type="HOGENOM" id="CLU_004620_1_1_6"/>
<dbReference type="Proteomes" id="UP000001952">
    <property type="component" value="Chromosome"/>
</dbReference>
<dbReference type="GO" id="GO:0005829">
    <property type="term" value="C:cytosol"/>
    <property type="evidence" value="ECO:0007669"/>
    <property type="project" value="TreeGrafter"/>
</dbReference>
<dbReference type="GO" id="GO:0005960">
    <property type="term" value="C:glycine cleavage complex"/>
    <property type="evidence" value="ECO:0007669"/>
    <property type="project" value="TreeGrafter"/>
</dbReference>
<dbReference type="GO" id="GO:0016594">
    <property type="term" value="F:glycine binding"/>
    <property type="evidence" value="ECO:0007669"/>
    <property type="project" value="TreeGrafter"/>
</dbReference>
<dbReference type="GO" id="GO:0004375">
    <property type="term" value="F:glycine dehydrogenase (decarboxylating) activity"/>
    <property type="evidence" value="ECO:0007669"/>
    <property type="project" value="UniProtKB-EC"/>
</dbReference>
<dbReference type="GO" id="GO:0030170">
    <property type="term" value="F:pyridoxal phosphate binding"/>
    <property type="evidence" value="ECO:0007669"/>
    <property type="project" value="TreeGrafter"/>
</dbReference>
<dbReference type="GO" id="GO:0019464">
    <property type="term" value="P:glycine decarboxylation via glycine cleavage system"/>
    <property type="evidence" value="ECO:0007669"/>
    <property type="project" value="UniProtKB-UniRule"/>
</dbReference>
<dbReference type="CDD" id="cd00613">
    <property type="entry name" value="GDC-P"/>
    <property type="match status" value="2"/>
</dbReference>
<dbReference type="FunFam" id="3.40.640.10:FF:000005">
    <property type="entry name" value="Glycine dehydrogenase (decarboxylating), mitochondrial"/>
    <property type="match status" value="1"/>
</dbReference>
<dbReference type="FunFam" id="3.90.1150.10:FF:000007">
    <property type="entry name" value="Glycine dehydrogenase (decarboxylating), mitochondrial"/>
    <property type="match status" value="1"/>
</dbReference>
<dbReference type="FunFam" id="3.40.640.10:FF:000007">
    <property type="entry name" value="glycine dehydrogenase (Decarboxylating), mitochondrial"/>
    <property type="match status" value="1"/>
</dbReference>
<dbReference type="Gene3D" id="3.90.1150.10">
    <property type="entry name" value="Aspartate Aminotransferase, domain 1"/>
    <property type="match status" value="1"/>
</dbReference>
<dbReference type="Gene3D" id="3.40.640.10">
    <property type="entry name" value="Type I PLP-dependent aspartate aminotransferase-like (Major domain)"/>
    <property type="match status" value="2"/>
</dbReference>
<dbReference type="HAMAP" id="MF_00711">
    <property type="entry name" value="GcvP"/>
    <property type="match status" value="1"/>
</dbReference>
<dbReference type="InterPro" id="IPR003437">
    <property type="entry name" value="GcvP"/>
</dbReference>
<dbReference type="InterPro" id="IPR049316">
    <property type="entry name" value="GDC-P_C"/>
</dbReference>
<dbReference type="InterPro" id="IPR049315">
    <property type="entry name" value="GDC-P_N"/>
</dbReference>
<dbReference type="InterPro" id="IPR020581">
    <property type="entry name" value="GDC_P"/>
</dbReference>
<dbReference type="InterPro" id="IPR015424">
    <property type="entry name" value="PyrdxlP-dep_Trfase"/>
</dbReference>
<dbReference type="InterPro" id="IPR015421">
    <property type="entry name" value="PyrdxlP-dep_Trfase_major"/>
</dbReference>
<dbReference type="InterPro" id="IPR015422">
    <property type="entry name" value="PyrdxlP-dep_Trfase_small"/>
</dbReference>
<dbReference type="NCBIfam" id="TIGR00461">
    <property type="entry name" value="gcvP"/>
    <property type="match status" value="1"/>
</dbReference>
<dbReference type="NCBIfam" id="NF003346">
    <property type="entry name" value="PRK04366.1"/>
    <property type="match status" value="1"/>
</dbReference>
<dbReference type="PANTHER" id="PTHR11773:SF13">
    <property type="entry name" value="GLYCINE DEHYDROGENASE (DECARBOXYLATING)"/>
    <property type="match status" value="1"/>
</dbReference>
<dbReference type="PANTHER" id="PTHR11773">
    <property type="entry name" value="GLYCINE DEHYDROGENASE, DECARBOXYLATING"/>
    <property type="match status" value="1"/>
</dbReference>
<dbReference type="Pfam" id="PF21478">
    <property type="entry name" value="GcvP2_C"/>
    <property type="match status" value="1"/>
</dbReference>
<dbReference type="Pfam" id="PF02347">
    <property type="entry name" value="GDC-P"/>
    <property type="match status" value="2"/>
</dbReference>
<dbReference type="SUPFAM" id="SSF53383">
    <property type="entry name" value="PLP-dependent transferases"/>
    <property type="match status" value="2"/>
</dbReference>
<protein>
    <recommendedName>
        <fullName evidence="1">Glycine dehydrogenase (decarboxylating)</fullName>
        <ecNumber evidence="1">1.4.4.2</ecNumber>
    </recommendedName>
    <alternativeName>
        <fullName evidence="1">Glycine cleavage system P-protein</fullName>
    </alternativeName>
    <alternativeName>
        <fullName evidence="1">Glycine decarboxylase</fullName>
    </alternativeName>
    <alternativeName>
        <fullName evidence="1">Glycine dehydrogenase (aminomethyl-transferring)</fullName>
    </alternativeName>
</protein>